<proteinExistence type="evidence at protein level"/>
<dbReference type="EC" id="7.3.2.1" evidence="1"/>
<dbReference type="EMBL" id="X02723">
    <property type="protein sequence ID" value="CAA26509.1"/>
    <property type="molecule type" value="Genomic_DNA"/>
</dbReference>
<dbReference type="EMBL" id="K01992">
    <property type="protein sequence ID" value="AAA24381.1"/>
    <property type="molecule type" value="Genomic_DNA"/>
</dbReference>
<dbReference type="EMBL" id="L10328">
    <property type="protein sequence ID" value="AAA62076.1"/>
    <property type="molecule type" value="Genomic_DNA"/>
</dbReference>
<dbReference type="EMBL" id="U00096">
    <property type="protein sequence ID" value="AAC76748.1"/>
    <property type="molecule type" value="Genomic_DNA"/>
</dbReference>
<dbReference type="EMBL" id="AP009048">
    <property type="protein sequence ID" value="BAE77563.1"/>
    <property type="molecule type" value="Genomic_DNA"/>
</dbReference>
<dbReference type="PIR" id="A30382">
    <property type="entry name" value="BVECZB"/>
</dbReference>
<dbReference type="RefSeq" id="NP_418181.1">
    <property type="nucleotide sequence ID" value="NC_000913.3"/>
</dbReference>
<dbReference type="RefSeq" id="WP_000063125.1">
    <property type="nucleotide sequence ID" value="NZ_STEB01000015.1"/>
</dbReference>
<dbReference type="SMR" id="P0AAH0"/>
<dbReference type="BioGRID" id="4262135">
    <property type="interactions" value="15"/>
</dbReference>
<dbReference type="ComplexPortal" id="CPX-4381">
    <property type="entry name" value="Phosphate ABC transporter complex"/>
</dbReference>
<dbReference type="DIP" id="DIP-47851N"/>
<dbReference type="FunCoup" id="P0AAH0">
    <property type="interactions" value="727"/>
</dbReference>
<dbReference type="IntAct" id="P0AAH0">
    <property type="interactions" value="28"/>
</dbReference>
<dbReference type="STRING" id="511145.b3725"/>
<dbReference type="TCDB" id="3.A.1.7.1">
    <property type="family name" value="the atp-binding cassette (abc) superfamily"/>
</dbReference>
<dbReference type="jPOST" id="P0AAH0"/>
<dbReference type="PaxDb" id="511145-b3725"/>
<dbReference type="EnsemblBacteria" id="AAC76748">
    <property type="protein sequence ID" value="AAC76748"/>
    <property type="gene ID" value="b3725"/>
</dbReference>
<dbReference type="GeneID" id="93778212"/>
<dbReference type="GeneID" id="948240"/>
<dbReference type="KEGG" id="ecj:JW3703"/>
<dbReference type="KEGG" id="eco:b3725"/>
<dbReference type="KEGG" id="ecoc:C3026_20190"/>
<dbReference type="PATRIC" id="fig|1411691.4.peg.2975"/>
<dbReference type="EchoBASE" id="EB0776"/>
<dbReference type="eggNOG" id="COG1117">
    <property type="taxonomic scope" value="Bacteria"/>
</dbReference>
<dbReference type="HOGENOM" id="CLU_000604_1_22_6"/>
<dbReference type="InParanoid" id="P0AAH0"/>
<dbReference type="OMA" id="TMSIYEN"/>
<dbReference type="OrthoDB" id="9802264at2"/>
<dbReference type="PhylomeDB" id="P0AAH0"/>
<dbReference type="BioCyc" id="EcoCyc:PSTB-MONOMER"/>
<dbReference type="BioCyc" id="MetaCyc:PSTB-MONOMER"/>
<dbReference type="PRO" id="PR:P0AAH0"/>
<dbReference type="Proteomes" id="UP000000625">
    <property type="component" value="Chromosome"/>
</dbReference>
<dbReference type="GO" id="GO:0055052">
    <property type="term" value="C:ATP-binding cassette (ABC) transporter complex, substrate-binding subunit-containing"/>
    <property type="evidence" value="ECO:0000303"/>
    <property type="project" value="ComplexPortal"/>
</dbReference>
<dbReference type="GO" id="GO:0016020">
    <property type="term" value="C:membrane"/>
    <property type="evidence" value="ECO:0000303"/>
    <property type="project" value="ComplexPortal"/>
</dbReference>
<dbReference type="GO" id="GO:0005886">
    <property type="term" value="C:plasma membrane"/>
    <property type="evidence" value="ECO:0000314"/>
    <property type="project" value="EcoCyc"/>
</dbReference>
<dbReference type="GO" id="GO:0005524">
    <property type="term" value="F:ATP binding"/>
    <property type="evidence" value="ECO:0000255"/>
    <property type="project" value="EcoCyc"/>
</dbReference>
<dbReference type="GO" id="GO:0016887">
    <property type="term" value="F:ATP hydrolysis activity"/>
    <property type="evidence" value="ECO:0007669"/>
    <property type="project" value="InterPro"/>
</dbReference>
<dbReference type="GO" id="GO:0015415">
    <property type="term" value="F:ATPase-coupled phosphate ion transmembrane transporter activity"/>
    <property type="evidence" value="ECO:0007669"/>
    <property type="project" value="UniProtKB-EC"/>
</dbReference>
<dbReference type="GO" id="GO:0005315">
    <property type="term" value="F:phosphate transmembrane transporter activity"/>
    <property type="evidence" value="ECO:0000314"/>
    <property type="project" value="EcoCyc"/>
</dbReference>
<dbReference type="GO" id="GO:0035435">
    <property type="term" value="P:phosphate ion transmembrane transport"/>
    <property type="evidence" value="ECO:0000314"/>
    <property type="project" value="EcoCyc"/>
</dbReference>
<dbReference type="GO" id="GO:0006817">
    <property type="term" value="P:phosphate ion transport"/>
    <property type="evidence" value="ECO:0000314"/>
    <property type="project" value="EcoCyc"/>
</dbReference>
<dbReference type="CDD" id="cd03260">
    <property type="entry name" value="ABC_PstB_phosphate_transporter"/>
    <property type="match status" value="1"/>
</dbReference>
<dbReference type="FunFam" id="3.40.50.300:FF:000132">
    <property type="entry name" value="Phosphate import ATP-binding protein PstB"/>
    <property type="match status" value="1"/>
</dbReference>
<dbReference type="Gene3D" id="3.40.50.300">
    <property type="entry name" value="P-loop containing nucleotide triphosphate hydrolases"/>
    <property type="match status" value="1"/>
</dbReference>
<dbReference type="InterPro" id="IPR003593">
    <property type="entry name" value="AAA+_ATPase"/>
</dbReference>
<dbReference type="InterPro" id="IPR003439">
    <property type="entry name" value="ABC_transporter-like_ATP-bd"/>
</dbReference>
<dbReference type="InterPro" id="IPR017871">
    <property type="entry name" value="ABC_transporter-like_CS"/>
</dbReference>
<dbReference type="InterPro" id="IPR027417">
    <property type="entry name" value="P-loop_NTPase"/>
</dbReference>
<dbReference type="InterPro" id="IPR005670">
    <property type="entry name" value="PstB-like"/>
</dbReference>
<dbReference type="NCBIfam" id="TIGR00972">
    <property type="entry name" value="3a0107s01c2"/>
    <property type="match status" value="1"/>
</dbReference>
<dbReference type="PANTHER" id="PTHR43423">
    <property type="entry name" value="ABC TRANSPORTER I FAMILY MEMBER 17"/>
    <property type="match status" value="1"/>
</dbReference>
<dbReference type="PANTHER" id="PTHR43423:SF3">
    <property type="entry name" value="PHOSPHATE IMPORT ATP-BINDING PROTEIN PSTB"/>
    <property type="match status" value="1"/>
</dbReference>
<dbReference type="Pfam" id="PF00005">
    <property type="entry name" value="ABC_tran"/>
    <property type="match status" value="1"/>
</dbReference>
<dbReference type="SMART" id="SM00382">
    <property type="entry name" value="AAA"/>
    <property type="match status" value="1"/>
</dbReference>
<dbReference type="SUPFAM" id="SSF52540">
    <property type="entry name" value="P-loop containing nucleoside triphosphate hydrolases"/>
    <property type="match status" value="1"/>
</dbReference>
<dbReference type="PROSITE" id="PS00211">
    <property type="entry name" value="ABC_TRANSPORTER_1"/>
    <property type="match status" value="1"/>
</dbReference>
<dbReference type="PROSITE" id="PS50893">
    <property type="entry name" value="ABC_TRANSPORTER_2"/>
    <property type="match status" value="1"/>
</dbReference>
<dbReference type="PROSITE" id="PS51238">
    <property type="entry name" value="PSTB"/>
    <property type="match status" value="1"/>
</dbReference>
<feature type="initiator methionine" description="Removed" evidence="2">
    <location>
        <position position="1"/>
    </location>
</feature>
<feature type="chain" id="PRO_0000092810" description="Phosphate import ATP-binding protein PstB">
    <location>
        <begin position="2"/>
        <end position="257"/>
    </location>
</feature>
<feature type="domain" description="ABC transporter" evidence="1">
    <location>
        <begin position="11"/>
        <end position="252"/>
    </location>
</feature>
<feature type="binding site" evidence="1">
    <location>
        <begin position="43"/>
        <end position="50"/>
    </location>
    <ligand>
        <name>ATP</name>
        <dbReference type="ChEBI" id="CHEBI:30616"/>
    </ligand>
</feature>
<feature type="mutagenesis site" description="Loss of phosphate transport." evidence="2">
    <original>G</original>
    <variation>I</variation>
    <location>
        <position position="48"/>
    </location>
</feature>
<feature type="mutagenesis site" description="Loss of phosphate transport." evidence="2">
    <original>K</original>
    <variation>Q</variation>
    <location>
        <position position="49"/>
    </location>
</feature>
<comment type="function">
    <text>Part of the ABC transporter complex PstSACB involved in phosphate import. Responsible for energy coupling to the transport system.</text>
</comment>
<comment type="catalytic activity">
    <reaction evidence="1">
        <text>phosphate(out) + ATP + H2O = ADP + 2 phosphate(in) + H(+)</text>
        <dbReference type="Rhea" id="RHEA:24440"/>
        <dbReference type="ChEBI" id="CHEBI:15377"/>
        <dbReference type="ChEBI" id="CHEBI:15378"/>
        <dbReference type="ChEBI" id="CHEBI:30616"/>
        <dbReference type="ChEBI" id="CHEBI:43474"/>
        <dbReference type="ChEBI" id="CHEBI:456216"/>
        <dbReference type="EC" id="7.3.2.1"/>
    </reaction>
</comment>
<comment type="subunit">
    <text evidence="1">The complex is composed of two ATP-binding proteins (PstB), two transmembrane proteins (PstC and PstA) and a solute-binding protein (PstS).</text>
</comment>
<comment type="subcellular location">
    <subcellularLocation>
        <location>Cell inner membrane</location>
        <topology>Peripheral membrane protein</topology>
    </subcellularLocation>
</comment>
<comment type="similarity">
    <text evidence="1">Belongs to the ABC transporter superfamily. Phosphate importer (TC 3.A.1.7) family.</text>
</comment>
<evidence type="ECO:0000255" key="1">
    <source>
        <dbReference type="HAMAP-Rule" id="MF_01702"/>
    </source>
</evidence>
<evidence type="ECO:0000269" key="2">
    <source>
    </source>
</evidence>
<organism>
    <name type="scientific">Escherichia coli (strain K12)</name>
    <dbReference type="NCBI Taxonomy" id="83333"/>
    <lineage>
        <taxon>Bacteria</taxon>
        <taxon>Pseudomonadati</taxon>
        <taxon>Pseudomonadota</taxon>
        <taxon>Gammaproteobacteria</taxon>
        <taxon>Enterobacterales</taxon>
        <taxon>Enterobacteriaceae</taxon>
        <taxon>Escherichia</taxon>
    </lineage>
</organism>
<sequence length="257" mass="29027">MSMVETAPSKIQVRNLNFYYGKFHALKNINLDIAKNQVTAFIGPSGCGKSTLLRTFNKMFELYPEQRAEGEILLDGDNILTNSQDIALLRAKVGMVFQKPTPFPMSIYDNIAFGVRLFEKLSRADMDERVQWALTKAALWNETKDKLHQSGYSLSGGQQQRLCIARGIAIRPEVLLLDEPCSALDPISTGRIEELITELKQDYTVVIVTHNMQQAARCSDHTAFMYLGELIEFSNTDDLFTKPAKKQTEDYITGRYG</sequence>
<protein>
    <recommendedName>
        <fullName evidence="1">Phosphate import ATP-binding protein PstB</fullName>
        <ecNumber evidence="1">7.3.2.1</ecNumber>
    </recommendedName>
    <alternativeName>
        <fullName evidence="1">ABC phosphate transporter</fullName>
    </alternativeName>
    <alternativeName>
        <fullName evidence="1">Phosphate-transporting ATPase</fullName>
    </alternativeName>
</protein>
<gene>
    <name evidence="1" type="primary">pstB</name>
    <name type="synonym">phoT</name>
    <name type="ordered locus">b3725</name>
    <name type="ordered locus">JW3703</name>
</gene>
<keyword id="KW-0067">ATP-binding</keyword>
<keyword id="KW-0997">Cell inner membrane</keyword>
<keyword id="KW-1003">Cell membrane</keyword>
<keyword id="KW-0903">Direct protein sequencing</keyword>
<keyword id="KW-0472">Membrane</keyword>
<keyword id="KW-0547">Nucleotide-binding</keyword>
<keyword id="KW-0592">Phosphate transport</keyword>
<keyword id="KW-1185">Reference proteome</keyword>
<keyword id="KW-1278">Translocase</keyword>
<keyword id="KW-0813">Transport</keyword>
<reference key="1">
    <citation type="journal article" date="1985" name="J. Mol. Biol.">
        <title>Nucleotide sequence of the genes involved in phosphate transport and regulation of the phosphate regulon in Escherichia coli.</title>
        <authorList>
            <person name="Amemura M."/>
            <person name="Makino K."/>
            <person name="Shinagawa H."/>
            <person name="Kobayashi A."/>
            <person name="Nakata A."/>
        </authorList>
    </citation>
    <scope>NUCLEOTIDE SEQUENCE [GENOMIC DNA]</scope>
</reference>
<reference key="2">
    <citation type="journal article" date="1985" name="J. Bacteriol.">
        <title>Phosphate-specific transport system of Escherichia coli: nucleotide sequence and gene-polypeptide relationships.</title>
        <authorList>
            <person name="Surin B.P."/>
            <person name="Rosenberg H."/>
            <person name="Cox G.B."/>
        </authorList>
    </citation>
    <scope>NUCLEOTIDE SEQUENCE [GENOMIC DNA]</scope>
</reference>
<reference key="3">
    <citation type="journal article" date="1993" name="Genomics">
        <title>DNA sequence and analysis of 136 kilobases of the Escherichia coli genome: organizational symmetry around the origin of replication.</title>
        <authorList>
            <person name="Burland V.D."/>
            <person name="Plunkett G. III"/>
            <person name="Daniels D.L."/>
            <person name="Blattner F.R."/>
        </authorList>
    </citation>
    <scope>NUCLEOTIDE SEQUENCE [LARGE SCALE GENOMIC DNA]</scope>
    <source>
        <strain>K12 / MG1655 / ATCC 47076</strain>
    </source>
</reference>
<reference key="4">
    <citation type="journal article" date="1997" name="Science">
        <title>The complete genome sequence of Escherichia coli K-12.</title>
        <authorList>
            <person name="Blattner F.R."/>
            <person name="Plunkett G. III"/>
            <person name="Bloch C.A."/>
            <person name="Perna N.T."/>
            <person name="Burland V."/>
            <person name="Riley M."/>
            <person name="Collado-Vides J."/>
            <person name="Glasner J.D."/>
            <person name="Rode C.K."/>
            <person name="Mayhew G.F."/>
            <person name="Gregor J."/>
            <person name="Davis N.W."/>
            <person name="Kirkpatrick H.A."/>
            <person name="Goeden M.A."/>
            <person name="Rose D.J."/>
            <person name="Mau B."/>
            <person name="Shao Y."/>
        </authorList>
    </citation>
    <scope>NUCLEOTIDE SEQUENCE [LARGE SCALE GENOMIC DNA]</scope>
    <source>
        <strain>K12 / MG1655 / ATCC 47076</strain>
    </source>
</reference>
<reference key="5">
    <citation type="journal article" date="2006" name="Mol. Syst. Biol.">
        <title>Highly accurate genome sequences of Escherichia coli K-12 strains MG1655 and W3110.</title>
        <authorList>
            <person name="Hayashi K."/>
            <person name="Morooka N."/>
            <person name="Yamamoto Y."/>
            <person name="Fujita K."/>
            <person name="Isono K."/>
            <person name="Choi S."/>
            <person name="Ohtsubo E."/>
            <person name="Baba T."/>
            <person name="Wanner B.L."/>
            <person name="Mori H."/>
            <person name="Horiuchi T."/>
        </authorList>
    </citation>
    <scope>NUCLEOTIDE SEQUENCE [LARGE SCALE GENOMIC DNA]</scope>
    <source>
        <strain>K12 / W3110 / ATCC 27325 / DSM 5911</strain>
    </source>
</reference>
<reference key="6">
    <citation type="journal article" date="1996" name="J. Bacteriol.">
        <title>PstB protein of the phosphate-specific transport system of Escherichia coli is an ATPase.</title>
        <authorList>
            <person name="Chan F.-Y."/>
            <person name="Torriani A."/>
        </authorList>
    </citation>
    <scope>PROTEIN SEQUENCE OF 2-11</scope>
    <scope>CHARACTERIZATION</scope>
    <scope>MUTAGENESIS OF GLY-48 AND LYS-49</scope>
    <source>
        <strain>BL21-DE3</strain>
    </source>
</reference>
<name>PSTB_ECOLI</name>
<accession>P0AAH0</accession>
<accession>P07655</accession>
<accession>Q2M843</accession>